<keyword id="KW-0007">Acetylation</keyword>
<keyword id="KW-1015">Disulfide bond</keyword>
<keyword id="KW-0227">DNA damage</keyword>
<keyword id="KW-0234">DNA repair</keyword>
<keyword id="KW-0235">DNA replication</keyword>
<keyword id="KW-0238">DNA-binding</keyword>
<keyword id="KW-1017">Isopeptide bond</keyword>
<keyword id="KW-0488">Methylation</keyword>
<keyword id="KW-0539">Nucleus</keyword>
<keyword id="KW-0597">Phosphoprotein</keyword>
<keyword id="KW-1185">Reference proteome</keyword>
<keyword id="KW-0832">Ubl conjugation</keyword>
<sequence length="261" mass="28749">MFEARLIQGSILKKVLEALKDLINEACWDISSGGVNLQSMDSSHVSLVQLTLRSEGFDTYRCDRNLAMGVNLTSMSKILKCAGNEDIITLRAEDNADTLALVFEAPNQEKVSDYEMKLMDLDVEQLGIPEQEYSCVVKMPSGEFARICRDLSHIGDAVVISCAKDGVKFSASGELGNGNIKLSQTSNVDKEEEAVSIEMNEPVQLTFALRYLNFFTKATPLSPTVTLSMSADVPLVVEYKIADMGHLKYYLAPKIEDEEGS</sequence>
<accession>P04961</accession>
<dbReference type="EMBL" id="Y00047">
    <property type="protein sequence ID" value="CAA68261.1"/>
    <property type="molecule type" value="mRNA"/>
</dbReference>
<dbReference type="EMBL" id="BC060570">
    <property type="protein sequence ID" value="AAH60570.1"/>
    <property type="molecule type" value="mRNA"/>
</dbReference>
<dbReference type="PIR" id="A26631">
    <property type="entry name" value="WMRTET"/>
</dbReference>
<dbReference type="RefSeq" id="NP_071776.1">
    <property type="nucleotide sequence ID" value="NM_022381.3"/>
</dbReference>
<dbReference type="BMRB" id="P04961"/>
<dbReference type="SMR" id="P04961"/>
<dbReference type="BioGRID" id="247765">
    <property type="interactions" value="8"/>
</dbReference>
<dbReference type="ComplexPortal" id="CPX-542">
    <property type="entry name" value="PCNA homotrimer"/>
</dbReference>
<dbReference type="FunCoup" id="P04961">
    <property type="interactions" value="4030"/>
</dbReference>
<dbReference type="IntAct" id="P04961">
    <property type="interactions" value="4"/>
</dbReference>
<dbReference type="MINT" id="P04961"/>
<dbReference type="STRING" id="10116.ENSRNOP00000028887"/>
<dbReference type="PhosphoSitePlus" id="P04961"/>
<dbReference type="jPOST" id="P04961"/>
<dbReference type="PaxDb" id="10116-ENSRNOP00000028887"/>
<dbReference type="Ensembl" id="ENSRNOT00000028887.7">
    <property type="protein sequence ID" value="ENSRNOP00000028887.4"/>
    <property type="gene ID" value="ENSRNOG00000021264.7"/>
</dbReference>
<dbReference type="GeneID" id="25737"/>
<dbReference type="KEGG" id="rno:25737"/>
<dbReference type="UCSC" id="RGD:3269">
    <property type="organism name" value="rat"/>
</dbReference>
<dbReference type="AGR" id="RGD:3269"/>
<dbReference type="CTD" id="5111"/>
<dbReference type="RGD" id="3269">
    <property type="gene designation" value="Pcna"/>
</dbReference>
<dbReference type="eggNOG" id="KOG1636">
    <property type="taxonomic scope" value="Eukaryota"/>
</dbReference>
<dbReference type="GeneTree" id="ENSGT00390000004965"/>
<dbReference type="HOGENOM" id="CLU_043978_3_0_1"/>
<dbReference type="InParanoid" id="P04961"/>
<dbReference type="OMA" id="EMKLINM"/>
<dbReference type="OrthoDB" id="534348at2759"/>
<dbReference type="PhylomeDB" id="P04961"/>
<dbReference type="TreeFam" id="TF313441"/>
<dbReference type="Reactome" id="R-RNO-110312">
    <property type="pathway name" value="Translesion synthesis by REV1"/>
</dbReference>
<dbReference type="Reactome" id="R-RNO-110314">
    <property type="pathway name" value="Recognition of DNA damage by PCNA-containing replication complex"/>
</dbReference>
<dbReference type="Reactome" id="R-RNO-110320">
    <property type="pathway name" value="Translesion Synthesis by POLH"/>
</dbReference>
<dbReference type="Reactome" id="R-RNO-174411">
    <property type="pathway name" value="Polymerase switching on the C-strand of the telomere"/>
</dbReference>
<dbReference type="Reactome" id="R-RNO-174414">
    <property type="pathway name" value="Processive synthesis on the C-strand of the telomere"/>
</dbReference>
<dbReference type="Reactome" id="R-RNO-174417">
    <property type="pathway name" value="Telomere C-strand (Lagging Strand) Synthesis"/>
</dbReference>
<dbReference type="Reactome" id="R-RNO-174437">
    <property type="pathway name" value="Removal of the Flap Intermediate from the C-strand"/>
</dbReference>
<dbReference type="Reactome" id="R-RNO-4615885">
    <property type="pathway name" value="SUMOylation of DNA replication proteins"/>
</dbReference>
<dbReference type="Reactome" id="R-RNO-5358565">
    <property type="pathway name" value="Mismatch repair (MMR) directed by MSH2:MSH6 (MutSalpha)"/>
</dbReference>
<dbReference type="Reactome" id="R-RNO-5651801">
    <property type="pathway name" value="PCNA-Dependent Long Patch Base Excision Repair"/>
</dbReference>
<dbReference type="Reactome" id="R-RNO-5655862">
    <property type="pathway name" value="Translesion synthesis by POLK"/>
</dbReference>
<dbReference type="Reactome" id="R-RNO-5656121">
    <property type="pathway name" value="Translesion synthesis by POLI"/>
</dbReference>
<dbReference type="Reactome" id="R-RNO-5656169">
    <property type="pathway name" value="Termination of translesion DNA synthesis"/>
</dbReference>
<dbReference type="Reactome" id="R-RNO-5685942">
    <property type="pathway name" value="HDR through Homologous Recombination (HRR)"/>
</dbReference>
<dbReference type="Reactome" id="R-RNO-5696397">
    <property type="pathway name" value="Gap-filling DNA repair synthesis and ligation in GG-NER"/>
</dbReference>
<dbReference type="Reactome" id="R-RNO-5696400">
    <property type="pathway name" value="Dual Incision in GG-NER"/>
</dbReference>
<dbReference type="Reactome" id="R-RNO-6782135">
    <property type="pathway name" value="Dual incision in TC-NER"/>
</dbReference>
<dbReference type="Reactome" id="R-RNO-6782210">
    <property type="pathway name" value="Gap-filling DNA repair synthesis and ligation in TC-NER"/>
</dbReference>
<dbReference type="Reactome" id="R-RNO-6804114">
    <property type="pathway name" value="TP53 Regulates Transcription of Genes Involved in G2 Cell Cycle Arrest"/>
</dbReference>
<dbReference type="Reactome" id="R-RNO-69091">
    <property type="pathway name" value="Polymerase switching"/>
</dbReference>
<dbReference type="Reactome" id="R-RNO-69166">
    <property type="pathway name" value="Removal of the Flap Intermediate"/>
</dbReference>
<dbReference type="Reactome" id="R-RNO-69183">
    <property type="pathway name" value="Processive synthesis on the lagging strand"/>
</dbReference>
<dbReference type="PRO" id="PR:P04961"/>
<dbReference type="Proteomes" id="UP000002494">
    <property type="component" value="Chromosome 3"/>
</dbReference>
<dbReference type="Bgee" id="ENSRNOG00000021264">
    <property type="expression patterns" value="Expressed in thymus and 20 other cell types or tissues"/>
</dbReference>
<dbReference type="GO" id="GO:0005813">
    <property type="term" value="C:centrosome"/>
    <property type="evidence" value="ECO:0000266"/>
    <property type="project" value="RGD"/>
</dbReference>
<dbReference type="GO" id="GO:0000785">
    <property type="term" value="C:chromatin"/>
    <property type="evidence" value="ECO:0000250"/>
    <property type="project" value="UniProtKB"/>
</dbReference>
<dbReference type="GO" id="GO:0000307">
    <property type="term" value="C:cyclin-dependent protein kinase holoenzyme complex"/>
    <property type="evidence" value="ECO:0000266"/>
    <property type="project" value="RGD"/>
</dbReference>
<dbReference type="GO" id="GO:0001673">
    <property type="term" value="C:male germ cell nucleus"/>
    <property type="evidence" value="ECO:0000266"/>
    <property type="project" value="RGD"/>
</dbReference>
<dbReference type="GO" id="GO:0016604">
    <property type="term" value="C:nuclear body"/>
    <property type="evidence" value="ECO:0007669"/>
    <property type="project" value="Ensembl"/>
</dbReference>
<dbReference type="GO" id="GO:0005652">
    <property type="term" value="C:nuclear lamina"/>
    <property type="evidence" value="ECO:0000266"/>
    <property type="project" value="RGD"/>
</dbReference>
<dbReference type="GO" id="GO:0043596">
    <property type="term" value="C:nuclear replication fork"/>
    <property type="evidence" value="ECO:0000266"/>
    <property type="project" value="RGD"/>
</dbReference>
<dbReference type="GO" id="GO:0005634">
    <property type="term" value="C:nucleus"/>
    <property type="evidence" value="ECO:0000314"/>
    <property type="project" value="ComplexPortal"/>
</dbReference>
<dbReference type="GO" id="GO:0043626">
    <property type="term" value="C:PCNA complex"/>
    <property type="evidence" value="ECO:0000250"/>
    <property type="project" value="UniProtKB"/>
</dbReference>
<dbReference type="GO" id="GO:0070557">
    <property type="term" value="C:PCNA-p21 complex"/>
    <property type="evidence" value="ECO:0000250"/>
    <property type="project" value="UniProtKB"/>
</dbReference>
<dbReference type="GO" id="GO:0005657">
    <property type="term" value="C:replication fork"/>
    <property type="evidence" value="ECO:0000266"/>
    <property type="project" value="RGD"/>
</dbReference>
<dbReference type="GO" id="GO:0003682">
    <property type="term" value="F:chromatin binding"/>
    <property type="evidence" value="ECO:0000250"/>
    <property type="project" value="UniProtKB"/>
</dbReference>
<dbReference type="GO" id="GO:0003684">
    <property type="term" value="F:damaged DNA binding"/>
    <property type="evidence" value="ECO:0000250"/>
    <property type="project" value="UniProtKB"/>
</dbReference>
<dbReference type="GO" id="GO:0032139">
    <property type="term" value="F:dinucleotide insertion or deletion binding"/>
    <property type="evidence" value="ECO:0000266"/>
    <property type="project" value="RGD"/>
</dbReference>
<dbReference type="GO" id="GO:0070182">
    <property type="term" value="F:DNA polymerase binding"/>
    <property type="evidence" value="ECO:0000266"/>
    <property type="project" value="RGD"/>
</dbReference>
<dbReference type="GO" id="GO:0030337">
    <property type="term" value="F:DNA polymerase processivity factor activity"/>
    <property type="evidence" value="ECO:0000318"/>
    <property type="project" value="GO_Central"/>
</dbReference>
<dbReference type="GO" id="GO:0019899">
    <property type="term" value="F:enzyme binding"/>
    <property type="evidence" value="ECO:0000266"/>
    <property type="project" value="RGD"/>
</dbReference>
<dbReference type="GO" id="GO:0035035">
    <property type="term" value="F:histone acetyltransferase binding"/>
    <property type="evidence" value="ECO:0000266"/>
    <property type="project" value="RGD"/>
</dbReference>
<dbReference type="GO" id="GO:0042802">
    <property type="term" value="F:identical protein binding"/>
    <property type="evidence" value="ECO:0000266"/>
    <property type="project" value="RGD"/>
</dbReference>
<dbReference type="GO" id="GO:0032405">
    <property type="term" value="F:MutLalpha complex binding"/>
    <property type="evidence" value="ECO:0000266"/>
    <property type="project" value="RGD"/>
</dbReference>
<dbReference type="GO" id="GO:0030331">
    <property type="term" value="F:nuclear estrogen receptor binding"/>
    <property type="evidence" value="ECO:0000353"/>
    <property type="project" value="RGD"/>
</dbReference>
<dbReference type="GO" id="GO:0044877">
    <property type="term" value="F:protein-containing complex binding"/>
    <property type="evidence" value="ECO:0000266"/>
    <property type="project" value="RGD"/>
</dbReference>
<dbReference type="GO" id="GO:0000701">
    <property type="term" value="F:purine-specific mismatch base pair DNA N-glycosylase activity"/>
    <property type="evidence" value="ECO:0000266"/>
    <property type="project" value="RGD"/>
</dbReference>
<dbReference type="GO" id="GO:0030971">
    <property type="term" value="F:receptor tyrosine kinase binding"/>
    <property type="evidence" value="ECO:0000266"/>
    <property type="project" value="RGD"/>
</dbReference>
<dbReference type="GO" id="GO:0006287">
    <property type="term" value="P:base-excision repair, gap-filling"/>
    <property type="evidence" value="ECO:0000266"/>
    <property type="project" value="RGD"/>
</dbReference>
<dbReference type="GO" id="GO:0070301">
    <property type="term" value="P:cellular response to hydrogen peroxide"/>
    <property type="evidence" value="ECO:0000270"/>
    <property type="project" value="RGD"/>
</dbReference>
<dbReference type="GO" id="GO:0034644">
    <property type="term" value="P:cellular response to UV"/>
    <property type="evidence" value="ECO:0000270"/>
    <property type="project" value="RGD"/>
</dbReference>
<dbReference type="GO" id="GO:0071466">
    <property type="term" value="P:cellular response to xenobiotic stimulus"/>
    <property type="evidence" value="ECO:0000266"/>
    <property type="project" value="RGD"/>
</dbReference>
<dbReference type="GO" id="GO:0030855">
    <property type="term" value="P:epithelial cell differentiation"/>
    <property type="evidence" value="ECO:0000266"/>
    <property type="project" value="RGD"/>
</dbReference>
<dbReference type="GO" id="GO:0044849">
    <property type="term" value="P:estrous cycle"/>
    <property type="evidence" value="ECO:0000270"/>
    <property type="project" value="RGD"/>
</dbReference>
<dbReference type="GO" id="GO:0007507">
    <property type="term" value="P:heart development"/>
    <property type="evidence" value="ECO:0000270"/>
    <property type="project" value="RGD"/>
</dbReference>
<dbReference type="GO" id="GO:0006272">
    <property type="term" value="P:leading strand elongation"/>
    <property type="evidence" value="ECO:0000318"/>
    <property type="project" value="GO_Central"/>
</dbReference>
<dbReference type="GO" id="GO:0097421">
    <property type="term" value="P:liver regeneration"/>
    <property type="evidence" value="ECO:0000270"/>
    <property type="project" value="RGD"/>
</dbReference>
<dbReference type="GO" id="GO:0006298">
    <property type="term" value="P:mismatch repair"/>
    <property type="evidence" value="ECO:0000266"/>
    <property type="project" value="RGD"/>
</dbReference>
<dbReference type="GO" id="GO:1902990">
    <property type="term" value="P:mitotic telomere maintenance via semi-conservative replication"/>
    <property type="evidence" value="ECO:0000266"/>
    <property type="project" value="RGD"/>
</dbReference>
<dbReference type="GO" id="GO:0000122">
    <property type="term" value="P:negative regulation of transcription by RNA polymerase II"/>
    <property type="evidence" value="ECO:0000266"/>
    <property type="project" value="RGD"/>
</dbReference>
<dbReference type="GO" id="GO:0032077">
    <property type="term" value="P:positive regulation of deoxyribonuclease activity"/>
    <property type="evidence" value="ECO:0000250"/>
    <property type="project" value="UniProtKB"/>
</dbReference>
<dbReference type="GO" id="GO:0045739">
    <property type="term" value="P:positive regulation of DNA repair"/>
    <property type="evidence" value="ECO:0000250"/>
    <property type="project" value="UniProtKB"/>
</dbReference>
<dbReference type="GO" id="GO:0045740">
    <property type="term" value="P:positive regulation of DNA replication"/>
    <property type="evidence" value="ECO:0000250"/>
    <property type="project" value="UniProtKB"/>
</dbReference>
<dbReference type="GO" id="GO:0031297">
    <property type="term" value="P:replication fork processing"/>
    <property type="evidence" value="ECO:0000266"/>
    <property type="project" value="RGD"/>
</dbReference>
<dbReference type="GO" id="GO:0046686">
    <property type="term" value="P:response to cadmium ion"/>
    <property type="evidence" value="ECO:0000270"/>
    <property type="project" value="RGD"/>
</dbReference>
<dbReference type="GO" id="GO:0071548">
    <property type="term" value="P:response to dexamethasone"/>
    <property type="evidence" value="ECO:0000270"/>
    <property type="project" value="RGD"/>
</dbReference>
<dbReference type="GO" id="GO:0032355">
    <property type="term" value="P:response to estradiol"/>
    <property type="evidence" value="ECO:0000270"/>
    <property type="project" value="RGD"/>
</dbReference>
<dbReference type="GO" id="GO:1902065">
    <property type="term" value="P:response to L-glutamate"/>
    <property type="evidence" value="ECO:0000270"/>
    <property type="project" value="RGD"/>
</dbReference>
<dbReference type="GO" id="GO:0033993">
    <property type="term" value="P:response to lipid"/>
    <property type="evidence" value="ECO:0000314"/>
    <property type="project" value="RGD"/>
</dbReference>
<dbReference type="GO" id="GO:0006979">
    <property type="term" value="P:response to oxidative stress"/>
    <property type="evidence" value="ECO:0000270"/>
    <property type="project" value="RGD"/>
</dbReference>
<dbReference type="GO" id="GO:0019985">
    <property type="term" value="P:translesion synthesis"/>
    <property type="evidence" value="ECO:0000250"/>
    <property type="project" value="UniProtKB"/>
</dbReference>
<dbReference type="CDD" id="cd00577">
    <property type="entry name" value="PCNA"/>
    <property type="match status" value="1"/>
</dbReference>
<dbReference type="FunFam" id="3.70.10.10:FF:000001">
    <property type="entry name" value="Proliferating cell nuclear antigen"/>
    <property type="match status" value="1"/>
</dbReference>
<dbReference type="Gene3D" id="3.70.10.10">
    <property type="match status" value="1"/>
</dbReference>
<dbReference type="HAMAP" id="MF_00317">
    <property type="entry name" value="DNApol_clamp_arch"/>
    <property type="match status" value="1"/>
</dbReference>
<dbReference type="InterPro" id="IPR046938">
    <property type="entry name" value="DNA_clamp_sf"/>
</dbReference>
<dbReference type="InterPro" id="IPR000730">
    <property type="entry name" value="Pr_cel_nuc_antig"/>
</dbReference>
<dbReference type="InterPro" id="IPR022649">
    <property type="entry name" value="Pr_cel_nuc_antig_C"/>
</dbReference>
<dbReference type="InterPro" id="IPR022659">
    <property type="entry name" value="Pr_cel_nuc_antig_CS"/>
</dbReference>
<dbReference type="InterPro" id="IPR022648">
    <property type="entry name" value="Pr_cel_nuc_antig_N"/>
</dbReference>
<dbReference type="NCBIfam" id="TIGR00590">
    <property type="entry name" value="pcna"/>
    <property type="match status" value="1"/>
</dbReference>
<dbReference type="PANTHER" id="PTHR11352">
    <property type="entry name" value="PROLIFERATING CELL NUCLEAR ANTIGEN"/>
    <property type="match status" value="1"/>
</dbReference>
<dbReference type="PANTHER" id="PTHR11352:SF0">
    <property type="entry name" value="PROLIFERATING CELL NUCLEAR ANTIGEN"/>
    <property type="match status" value="1"/>
</dbReference>
<dbReference type="Pfam" id="PF02747">
    <property type="entry name" value="PCNA_C"/>
    <property type="match status" value="1"/>
</dbReference>
<dbReference type="Pfam" id="PF00705">
    <property type="entry name" value="PCNA_N"/>
    <property type="match status" value="1"/>
</dbReference>
<dbReference type="PRINTS" id="PR00339">
    <property type="entry name" value="PCNACYCLIN"/>
</dbReference>
<dbReference type="SUPFAM" id="SSF55979">
    <property type="entry name" value="DNA clamp"/>
    <property type="match status" value="2"/>
</dbReference>
<dbReference type="PROSITE" id="PS01251">
    <property type="entry name" value="PCNA_1"/>
    <property type="match status" value="1"/>
</dbReference>
<dbReference type="PROSITE" id="PS00293">
    <property type="entry name" value="PCNA_2"/>
    <property type="match status" value="1"/>
</dbReference>
<protein>
    <recommendedName>
        <fullName>Proliferating cell nuclear antigen</fullName>
        <shortName>PCNA</shortName>
    </recommendedName>
    <alternativeName>
        <fullName>Cyclin</fullName>
    </alternativeName>
</protein>
<name>PCNA_RAT</name>
<reference key="1">
    <citation type="journal article" date="1987" name="EMBO J.">
        <title>Molecular cloning of cDNA coding for rat proliferating cell nuclear antigen (PCNA)/cyclin.</title>
        <authorList>
            <person name="Matsumoto K."/>
            <person name="Moriuchi T."/>
            <person name="Koji T."/>
            <person name="Nakan P.K."/>
        </authorList>
    </citation>
    <scope>NUCLEOTIDE SEQUENCE [MRNA]</scope>
    <source>
        <strain>Wistar Furth</strain>
    </source>
</reference>
<reference key="2">
    <citation type="journal article" date="2004" name="Genome Res.">
        <title>The status, quality, and expansion of the NIH full-length cDNA project: the Mammalian Gene Collection (MGC).</title>
        <authorList>
            <consortium name="The MGC Project Team"/>
        </authorList>
    </citation>
    <scope>NUCLEOTIDE SEQUENCE [LARGE SCALE MRNA]</scope>
    <source>
        <tissue>Pituitary</tissue>
    </source>
</reference>
<reference key="3">
    <citation type="journal article" date="2005" name="Biochim. Biophys. Acta">
        <title>A novel PDIP1-related protein, KCTD10, that interacts with proliferating cell nuclear antigen and DNA polymerase delta.</title>
        <authorList>
            <person name="Zhou J."/>
            <person name="Ren K."/>
            <person name="Liu X."/>
            <person name="Xiong X."/>
            <person name="Hu X."/>
            <person name="Zhang J."/>
        </authorList>
    </citation>
    <scope>INTERACTION WITH KCTD10</scope>
    <source>
        <strain>Wistar</strain>
    </source>
</reference>
<feature type="chain" id="PRO_0000149161" description="Proliferating cell nuclear antigen">
    <location>
        <begin position="1"/>
        <end position="261"/>
    </location>
</feature>
<feature type="DNA-binding region" evidence="3">
    <location>
        <begin position="61"/>
        <end position="80"/>
    </location>
</feature>
<feature type="modified residue" description="N6-acetyllysine" evidence="1">
    <location>
        <position position="14"/>
    </location>
</feature>
<feature type="modified residue" description="N6-acetyllysine" evidence="1">
    <location>
        <position position="77"/>
    </location>
</feature>
<feature type="modified residue" description="N6-acetyllysine" evidence="1">
    <location>
        <position position="80"/>
    </location>
</feature>
<feature type="modified residue" description="Phosphotyrosine; by EGFR" evidence="1">
    <location>
        <position position="211"/>
    </location>
</feature>
<feature type="modified residue" description="N6-acetyllysine" evidence="1">
    <location>
        <position position="248"/>
    </location>
</feature>
<feature type="disulfide bond" evidence="1">
    <location>
        <begin position="135"/>
        <end position="162"/>
    </location>
</feature>
<feature type="cross-link" description="Glycyl lysine isopeptide (Lys-Gly) (interchain with G-Cter in SUMO2); alternate" evidence="1">
    <location>
        <position position="164"/>
    </location>
</feature>
<feature type="cross-link" description="Glycyl lysine isopeptide (Lys-Gly) (interchain with G-Cter in ubiquitin); alternate" evidence="1">
    <location>
        <position position="164"/>
    </location>
</feature>
<feature type="cross-link" description="Glycyl lysine isopeptide (Lys-Gly) (interchain with G-Cter in SUMO2)" evidence="1">
    <location>
        <position position="254"/>
    </location>
</feature>
<organism>
    <name type="scientific">Rattus norvegicus</name>
    <name type="common">Rat</name>
    <dbReference type="NCBI Taxonomy" id="10116"/>
    <lineage>
        <taxon>Eukaryota</taxon>
        <taxon>Metazoa</taxon>
        <taxon>Chordata</taxon>
        <taxon>Craniata</taxon>
        <taxon>Vertebrata</taxon>
        <taxon>Euteleostomi</taxon>
        <taxon>Mammalia</taxon>
        <taxon>Eutheria</taxon>
        <taxon>Euarchontoglires</taxon>
        <taxon>Glires</taxon>
        <taxon>Rodentia</taxon>
        <taxon>Myomorpha</taxon>
        <taxon>Muroidea</taxon>
        <taxon>Muridae</taxon>
        <taxon>Murinae</taxon>
        <taxon>Rattus</taxon>
    </lineage>
</organism>
<proteinExistence type="evidence at protein level"/>
<comment type="function">
    <text evidence="1">Auxiliary protein of DNA polymerase delta and epsilon, is involved in the control of eukaryotic DNA replication by increasing the polymerase's processibility during elongation of the leading strand. Induces a robust stimulatory effect on the 3'-5' exonuclease and 3'-phosphodiesterase, but not apurinic-apyrimidinic (AP) endonuclease, APEX2 activities. Has to be loaded onto DNA in order to be able to stimulate APEX2. Plays a key role in DNA damage response (DDR) by being conveniently positioned at the replication fork to coordinate DNA replication with DNA repair and DNA damage tolerance pathways. Acts as a loading platform to recruit DDR proteins that allow completion of DNA replication after DNA damage and promote postreplication repair: Monoubiquitinated PCNA leads to recruitment of translesion (TLS) polymerases, while 'Lys-63'-linked polyubiquitination of PCNA is involved in error-free pathway and employs recombination mechanisms to synthesize across the lesion (By similarity).</text>
</comment>
<comment type="subunit">
    <text evidence="1 2 4">Homotrimer. Interacts with p300/EP300; the interaction occurs on chromatin in UV-irradiated damaged cells. Interacts with CREBBP (via transactivation domain and C-terminus); the interaction occurs on chromatin in UV-irradiated damaged cells. Directly interacts with POLD1, POLD3 and POLD4 subunits of the DNA polymerase delta complex, POLD3 being the major interacting partner; the interaction with POLD3 is inhibited by CDKN1A/p21(CIP1). Forms a complex with activator 1 heteropentamer in the presence of ATP. Interacts with EXO1, POLH, POLK, DNMT1, ERCC5, FEN1, CDC6 and POLDIP2. Interacts with POLB (By similarity). Interacts with APEX2; this interaction is triggered by reactive oxygen species and increased by misincorporation of uracil in nuclear DNA. Forms a ternary complex with DNTTIP2 and core histone (By similarity). Interacts with KCTD10 (PubMed:15982757). Interacts with PPP1R15A (By similarity). Interacts with SMARCA5/SNF2H (By similarity). Interacts with BAZ1B/WSTF; the interaction is direct and is required for BAZ1B/WSTF binding to replication foci during S phase (By similarity). Interacts with HLTF and SHPRH. Interacts with NUDT15. Interaction is disrupted in response to UV irradiation and acetylation. Interacts with CDKN1A/p21(CIP1) and CDT1; interacts via their PIP-box which also recruits the DCX(DTL) complex. The interaction with CDKN1A inhibits POLD3 binding. Interacts with DDX11. Interacts with EGFR; positively regulates PCNA. Interacts with PARPBP. Interacts (when ubiquitinated) with SPRTN; leading to enhance RAD18-mediated PCNA ubiquitination. Interacts (when polyubiquitinated) with ZRANB3. Interacts with SMARCAD1. Interacts with CDKN1C. Interacts with PCLAF (via PIP-box). Interacts with RTEL1 (via PIP-box); the interaction is direct and essential for the suppression of telomere fragility. Interacts with FAM111A (via PIP-box); the interaction is direct and required for PCNA loading on chromatin binding. Interacts with LIG1. Interacts with SETMAR. Interacts with ANKRD17. Interacts with FBXO18/FBH1 (via PIP-box); the interaction recruits the DCX(DTL) complex and promotes ubiquitination and degradation of FBXO18/FBH1. Interacts with POLN (By similarity). Interacts with SDE2 (via PIP-box); the interaction is direct and prevents ultraviolet light induced monoubiquitination (By similarity). Component of the replisome complex composed of at least DONSON, MCM2, MCM7, PCNA and TICRR; interaction at least with PCNA occurs during DNA replication (By similarity). Interacts with MAPK15; the interaction is chromatin binding dependent and prevents MDM2-mediated PCNA destruction by inhibiting the association of PCNA with MDM2. Interacts with PARP10 (via PIP-box) (By similarity). Interacts with DDI2 (By similarity). Interacts with HMCES (via PIP-box) (By similarity). Interacts with TRAIP (via PIP-box) (By similarity). Interacts with UHRF2 (By similarity). Interacts with ALKBH2; this interaction is enhanced during the S-phase of the cell cycle. Interacts with ATAD5; the interaction promotes USP1-mediated PCNA deubiquitination (By similarity). Interacts (when phosphorylated) with GRB2 (By similarity). Interacts with ANG (By similarity). Interacts with nuclear UNG; this interaction mediates UNG recruitment to S-phase replication foci. Interacts with ERCC6L2 (via an atypical PIP-box); this interaction facilitates cenrtomeric localization of ERCC6L2 (By similarity).</text>
</comment>
<comment type="subcellular location">
    <subcellularLocation>
        <location evidence="1">Nucleus</location>
    </subcellularLocation>
    <text evidence="1">Forms nuclear foci representing sites of ongoing DNA replication and vary in morphology and number during S phase. Together with APEX2, is redistributed in discrete nuclear foci in presence of oxidative DNA damaging agents. Colocalizes with CREBBP, EP300 and POLD1 to sites of DNA damage (By similarity).</text>
</comment>
<comment type="PTM">
    <text evidence="1">Phosphorylated. Phosphorylation at Tyr-211 by EGFR stabilizes chromatin-associated PCNA (By similarity).</text>
</comment>
<comment type="PTM">
    <text evidence="1">Acetylated by CREBBP and p300/EP300; preferentially acetylated by CREBBP on Lys-80, Lys-13 and Lys-14 and on Lys-77 by p300/EP300 upon loading on chromatin in response to UV irradiation. Lysine acetylation disrupts association with chromatin, hence promoting PCNA ubiquitination and proteasomal degradation in response to UV damage in a CREBBP- and EP300-dependent manner. Acetylation disrupts interaction with NUDT15 and promotes degradation (By similarity).</text>
</comment>
<comment type="PTM">
    <text evidence="1">Ubiquitinated. Following DNA damage, can be either monoubiquitinated to stimulate direct bypass of DNA lesions by specialized DNA polymerases or polyubiquitinated to promote recombination-dependent DNA synthesis across DNA lesions by template switching mechanisms. Following induction of replication stress, monoubiquitinated by the UBE2B-RAD18 complex on Lys-164, leading to recruit translesion (TLS) polymerases, which are able to synthesize across DNA lesions in a potentially error-prone manner. An error-free pathway also exists and requires non-canonical polyubiquitination on Lys-164 through 'Lys-63' linkage of ubiquitin moieties by the E2 complex UBE2N-UBE2V2 and the E3 ligases, HLTF, RNF8 and SHPRH. This error-free pathway, also known as template switching, employs recombination mechanisms to synthesize across the lesion, using as a template the undamaged, newly synthesized strand of the sister chromatid. Monoubiquitination at Lys-164 also takes place in undamaged proliferating cells, and is mediated by the DCX(DTL) complex, leading to enhance PCNA-dependent translesion DNA synthesis. Sumoylated during S phase (By similarity).</text>
</comment>
<comment type="PTM">
    <text evidence="1">Methylated on glutamate residues by ARMT1.</text>
</comment>
<comment type="similarity">
    <text evidence="5">Belongs to the PCNA family.</text>
</comment>
<evidence type="ECO:0000250" key="1">
    <source>
        <dbReference type="UniProtKB" id="P12004"/>
    </source>
</evidence>
<evidence type="ECO:0000250" key="2">
    <source>
        <dbReference type="UniProtKB" id="P17918"/>
    </source>
</evidence>
<evidence type="ECO:0000255" key="3"/>
<evidence type="ECO:0000269" key="4">
    <source>
    </source>
</evidence>
<evidence type="ECO:0000305" key="5"/>
<gene>
    <name type="primary">Pcna</name>
</gene>